<proteinExistence type="evidence at protein level"/>
<name>UFOG1_TAXBA</name>
<sequence length="12" mass="1302">LTPNTLSDLNSK</sequence>
<evidence type="ECO:0000255" key="1"/>
<evidence type="ECO:0000269" key="2">
    <source>
    </source>
</evidence>
<evidence type="ECO:0000303" key="3">
    <source>
    </source>
</evidence>
<evidence type="ECO:0000305" key="4"/>
<accession>P85358</accession>
<organism>
    <name type="scientific">Taxus baccata</name>
    <name type="common">English yew</name>
    <dbReference type="NCBI Taxonomy" id="25629"/>
    <lineage>
        <taxon>Eukaryota</taxon>
        <taxon>Viridiplantae</taxon>
        <taxon>Streptophyta</taxon>
        <taxon>Embryophyta</taxon>
        <taxon>Tracheophyta</taxon>
        <taxon>Spermatophyta</taxon>
        <taxon>Pinopsida</taxon>
        <taxon>Pinidae</taxon>
        <taxon>Conifers II</taxon>
        <taxon>Cupressales</taxon>
        <taxon>Taxaceae</taxon>
        <taxon>Taxus</taxon>
    </lineage>
</organism>
<feature type="chain" id="PRO_0000315927" description="Putative glycosyltransferase">
    <location>
        <begin position="1" status="less than"/>
        <end position="12" status="greater than"/>
    </location>
</feature>
<feature type="unsure residue" description="L or I" evidence="2">
    <location>
        <position position="1"/>
    </location>
</feature>
<feature type="unsure residue" description="L or I" evidence="2">
    <location>
        <position position="6"/>
    </location>
</feature>
<feature type="unsure residue" description="L or I" evidence="2">
    <location>
        <position position="9"/>
    </location>
</feature>
<feature type="unsure residue" description="K or Q" evidence="2">
    <location>
        <position position="12"/>
    </location>
</feature>
<feature type="non-terminal residue" evidence="3">
    <location>
        <position position="1"/>
    </location>
</feature>
<feature type="non-terminal residue" evidence="3">
    <location>
        <position position="12"/>
    </location>
</feature>
<comment type="subcellular location">
    <subcellularLocation>
        <location evidence="2">Secreted</location>
        <location evidence="2">Cell wall</location>
    </subcellularLocation>
</comment>
<comment type="similarity">
    <text evidence="1">Belongs to the UDP-glycosyltransferase family.</text>
</comment>
<protein>
    <recommendedName>
        <fullName evidence="4">Putative glycosyltransferase</fullName>
        <ecNumber evidence="4">2.4.-.-</ecNumber>
    </recommendedName>
</protein>
<dbReference type="EC" id="2.4.-.-" evidence="4"/>
<dbReference type="GO" id="GO:0005576">
    <property type="term" value="C:extracellular region"/>
    <property type="evidence" value="ECO:0007669"/>
    <property type="project" value="UniProtKB-KW"/>
</dbReference>
<dbReference type="GO" id="GO:0016757">
    <property type="term" value="F:glycosyltransferase activity"/>
    <property type="evidence" value="ECO:0007669"/>
    <property type="project" value="UniProtKB-KW"/>
</dbReference>
<reference evidence="4" key="1">
    <citation type="journal article" date="2009" name="J. Plant Physiol.">
        <title>Analysis of the soluble cell wall proteome of gymnosperms.</title>
        <authorList>
            <person name="Uzal E.N."/>
            <person name="Gomez-Ros L.V."/>
            <person name="Hernandez J.A."/>
            <person name="Pedreno M.A."/>
            <person name="Cuello J."/>
            <person name="Ros Barcelo A."/>
        </authorList>
    </citation>
    <scope>PROTEIN SEQUENCE</scope>
    <scope>SUBCELLULAR LOCATION</scope>
    <source>
        <strain evidence="2">PC-1008</strain>
        <tissue evidence="2">Callus</tissue>
    </source>
</reference>
<keyword id="KW-0134">Cell wall</keyword>
<keyword id="KW-0903">Direct protein sequencing</keyword>
<keyword id="KW-0328">Glycosyltransferase</keyword>
<keyword id="KW-0964">Secreted</keyword>
<keyword id="KW-0808">Transferase</keyword>